<comment type="function">
    <text>Part of a binding-protein-dependent transport system for aliphatic sulfonates. Putative binding protein.</text>
</comment>
<comment type="subcellular location">
    <subcellularLocation>
        <location evidence="1">Cell membrane</location>
        <topology evidence="1">Lipid-anchor</topology>
    </subcellularLocation>
</comment>
<comment type="induction">
    <text>Repressed by sulfate and cysteine.</text>
</comment>
<comment type="similarity">
    <text evidence="2">Belongs to the bacterial solute-binding protein SsuA/TauA family.</text>
</comment>
<keyword id="KW-1003">Cell membrane</keyword>
<keyword id="KW-0449">Lipoprotein</keyword>
<keyword id="KW-0472">Membrane</keyword>
<keyword id="KW-0564">Palmitate</keyword>
<keyword id="KW-1185">Reference proteome</keyword>
<keyword id="KW-0732">Signal</keyword>
<keyword id="KW-0813">Transport</keyword>
<evidence type="ECO:0000255" key="1">
    <source>
        <dbReference type="PROSITE-ProRule" id="PRU00303"/>
    </source>
</evidence>
<evidence type="ECO:0000305" key="2"/>
<dbReference type="EMBL" id="L16808">
    <property type="protein sequence ID" value="AAA64348.1"/>
    <property type="molecule type" value="Genomic_DNA"/>
</dbReference>
<dbReference type="EMBL" id="Z93102">
    <property type="protein sequence ID" value="CAB07521.1"/>
    <property type="molecule type" value="Genomic_DNA"/>
</dbReference>
<dbReference type="EMBL" id="AL009126">
    <property type="protein sequence ID" value="CAB12712.1"/>
    <property type="molecule type" value="Genomic_DNA"/>
</dbReference>
<dbReference type="PIR" id="I39927">
    <property type="entry name" value="I39927"/>
</dbReference>
<dbReference type="RefSeq" id="NP_388764.1">
    <property type="nucleotide sequence ID" value="NC_000964.3"/>
</dbReference>
<dbReference type="RefSeq" id="WP_003245431.1">
    <property type="nucleotide sequence ID" value="NZ_OZ025638.1"/>
</dbReference>
<dbReference type="SMR" id="P40400"/>
<dbReference type="FunCoup" id="P40400">
    <property type="interactions" value="274"/>
</dbReference>
<dbReference type="STRING" id="224308.BSU08840"/>
<dbReference type="PaxDb" id="224308-BSU08840"/>
<dbReference type="EnsemblBacteria" id="CAB12712">
    <property type="protein sequence ID" value="CAB12712"/>
    <property type="gene ID" value="BSU_08840"/>
</dbReference>
<dbReference type="GeneID" id="936215"/>
<dbReference type="KEGG" id="bsu:BSU08840"/>
<dbReference type="PATRIC" id="fig|224308.179.peg.954"/>
<dbReference type="eggNOG" id="COG0715">
    <property type="taxonomic scope" value="Bacteria"/>
</dbReference>
<dbReference type="InParanoid" id="P40400"/>
<dbReference type="OrthoDB" id="286202at2"/>
<dbReference type="PhylomeDB" id="P40400"/>
<dbReference type="BioCyc" id="BSUB:BSU08840-MONOMER"/>
<dbReference type="Proteomes" id="UP000001570">
    <property type="component" value="Chromosome"/>
</dbReference>
<dbReference type="GO" id="GO:0005886">
    <property type="term" value="C:plasma membrane"/>
    <property type="evidence" value="ECO:0007669"/>
    <property type="project" value="UniProtKB-SubCell"/>
</dbReference>
<dbReference type="GO" id="GO:0042626">
    <property type="term" value="F:ATPase-coupled transmembrane transporter activity"/>
    <property type="evidence" value="ECO:0007669"/>
    <property type="project" value="InterPro"/>
</dbReference>
<dbReference type="CDD" id="cd01008">
    <property type="entry name" value="PBP2_NrtA_SsuA_CpmA_like"/>
    <property type="match status" value="1"/>
</dbReference>
<dbReference type="FunFam" id="3.40.190.10:FF:000050">
    <property type="entry name" value="Sulfonate ABC transporter substrate-binding protein"/>
    <property type="match status" value="1"/>
</dbReference>
<dbReference type="Gene3D" id="3.40.190.10">
    <property type="entry name" value="Periplasmic binding protein-like II"/>
    <property type="match status" value="2"/>
</dbReference>
<dbReference type="InterPro" id="IPR010067">
    <property type="entry name" value="ABC_SsuA_sub-bd"/>
</dbReference>
<dbReference type="InterPro" id="IPR001638">
    <property type="entry name" value="Solute-binding_3/MltF_N"/>
</dbReference>
<dbReference type="InterPro" id="IPR015168">
    <property type="entry name" value="SsuA/THI5"/>
</dbReference>
<dbReference type="NCBIfam" id="TIGR01728">
    <property type="entry name" value="SsuA_fam"/>
    <property type="match status" value="1"/>
</dbReference>
<dbReference type="PANTHER" id="PTHR30024">
    <property type="entry name" value="ALIPHATIC SULFONATES-BINDING PROTEIN-RELATED"/>
    <property type="match status" value="1"/>
</dbReference>
<dbReference type="PANTHER" id="PTHR30024:SF42">
    <property type="entry name" value="ALIPHATIC SULFONATES-BINDING PROTEIN-RELATED"/>
    <property type="match status" value="1"/>
</dbReference>
<dbReference type="Pfam" id="PF09084">
    <property type="entry name" value="NMT1"/>
    <property type="match status" value="1"/>
</dbReference>
<dbReference type="SMART" id="SM00062">
    <property type="entry name" value="PBPb"/>
    <property type="match status" value="1"/>
</dbReference>
<dbReference type="SUPFAM" id="SSF53850">
    <property type="entry name" value="Periplasmic binding protein-like II"/>
    <property type="match status" value="1"/>
</dbReference>
<dbReference type="PROSITE" id="PS51257">
    <property type="entry name" value="PROKAR_LIPOPROTEIN"/>
    <property type="match status" value="1"/>
</dbReference>
<feature type="signal peptide" evidence="1">
    <location>
        <begin position="1"/>
        <end position="17"/>
    </location>
</feature>
<feature type="chain" id="PRO_0000031863" description="Putative aliphatic sulfonates-binding protein">
    <location>
        <begin position="18"/>
        <end position="332"/>
    </location>
</feature>
<feature type="lipid moiety-binding region" description="N-palmitoyl cysteine" evidence="2">
    <location>
        <position position="18"/>
    </location>
</feature>
<feature type="lipid moiety-binding region" description="S-diacylglycerol cysteine" evidence="2">
    <location>
        <position position="18"/>
    </location>
</feature>
<gene>
    <name type="primary">ssuA</name>
    <name type="synonym">ygbA</name>
    <name type="synonym">yzeA</name>
    <name type="ordered locus">BSU08840</name>
</gene>
<reference key="1">
    <citation type="journal article" date="1994" name="Biochim. Biophys. Acta">
        <title>Isolation of Tn917 insertional mutants of Bacillus subtilis that are resistant to the protonophore carbonyl cyanide m-chlorophenylhydrazone.</title>
        <authorList>
            <person name="Quirk P.G."/>
            <person name="Guffanti A.A."/>
            <person name="Clejan S."/>
            <person name="Cheng J."/>
            <person name="Krulwich T.A."/>
        </authorList>
    </citation>
    <scope>NUCLEOTIDE SEQUENCE [GENOMIC DNA]</scope>
    <source>
        <strain>BD99 / MS11</strain>
    </source>
</reference>
<reference key="2">
    <citation type="journal article" date="1998" name="Microbiology">
        <title>Bacillus subtilis genes for the utilization of sulfur from aliphatic sulfonates.</title>
        <authorList>
            <person name="van der Ploeg J.R."/>
            <person name="Cummings N.J."/>
            <person name="Leisinger T."/>
            <person name="Connerton I.F."/>
        </authorList>
    </citation>
    <scope>NUCLEOTIDE SEQUENCE [GENOMIC DNA]</scope>
    <source>
        <strain>168</strain>
    </source>
</reference>
<reference key="3">
    <citation type="journal article" date="1997" name="Nature">
        <title>The complete genome sequence of the Gram-positive bacterium Bacillus subtilis.</title>
        <authorList>
            <person name="Kunst F."/>
            <person name="Ogasawara N."/>
            <person name="Moszer I."/>
            <person name="Albertini A.M."/>
            <person name="Alloni G."/>
            <person name="Azevedo V."/>
            <person name="Bertero M.G."/>
            <person name="Bessieres P."/>
            <person name="Bolotin A."/>
            <person name="Borchert S."/>
            <person name="Borriss R."/>
            <person name="Boursier L."/>
            <person name="Brans A."/>
            <person name="Braun M."/>
            <person name="Brignell S.C."/>
            <person name="Bron S."/>
            <person name="Brouillet S."/>
            <person name="Bruschi C.V."/>
            <person name="Caldwell B."/>
            <person name="Capuano V."/>
            <person name="Carter N.M."/>
            <person name="Choi S.-K."/>
            <person name="Codani J.-J."/>
            <person name="Connerton I.F."/>
            <person name="Cummings N.J."/>
            <person name="Daniel R.A."/>
            <person name="Denizot F."/>
            <person name="Devine K.M."/>
            <person name="Duesterhoeft A."/>
            <person name="Ehrlich S.D."/>
            <person name="Emmerson P.T."/>
            <person name="Entian K.-D."/>
            <person name="Errington J."/>
            <person name="Fabret C."/>
            <person name="Ferrari E."/>
            <person name="Foulger D."/>
            <person name="Fritz C."/>
            <person name="Fujita M."/>
            <person name="Fujita Y."/>
            <person name="Fuma S."/>
            <person name="Galizzi A."/>
            <person name="Galleron N."/>
            <person name="Ghim S.-Y."/>
            <person name="Glaser P."/>
            <person name="Goffeau A."/>
            <person name="Golightly E.J."/>
            <person name="Grandi G."/>
            <person name="Guiseppi G."/>
            <person name="Guy B.J."/>
            <person name="Haga K."/>
            <person name="Haiech J."/>
            <person name="Harwood C.R."/>
            <person name="Henaut A."/>
            <person name="Hilbert H."/>
            <person name="Holsappel S."/>
            <person name="Hosono S."/>
            <person name="Hullo M.-F."/>
            <person name="Itaya M."/>
            <person name="Jones L.-M."/>
            <person name="Joris B."/>
            <person name="Karamata D."/>
            <person name="Kasahara Y."/>
            <person name="Klaerr-Blanchard M."/>
            <person name="Klein C."/>
            <person name="Kobayashi Y."/>
            <person name="Koetter P."/>
            <person name="Koningstein G."/>
            <person name="Krogh S."/>
            <person name="Kumano M."/>
            <person name="Kurita K."/>
            <person name="Lapidus A."/>
            <person name="Lardinois S."/>
            <person name="Lauber J."/>
            <person name="Lazarevic V."/>
            <person name="Lee S.-M."/>
            <person name="Levine A."/>
            <person name="Liu H."/>
            <person name="Masuda S."/>
            <person name="Mauel C."/>
            <person name="Medigue C."/>
            <person name="Medina N."/>
            <person name="Mellado R.P."/>
            <person name="Mizuno M."/>
            <person name="Moestl D."/>
            <person name="Nakai S."/>
            <person name="Noback M."/>
            <person name="Noone D."/>
            <person name="O'Reilly M."/>
            <person name="Ogawa K."/>
            <person name="Ogiwara A."/>
            <person name="Oudega B."/>
            <person name="Park S.-H."/>
            <person name="Parro V."/>
            <person name="Pohl T.M."/>
            <person name="Portetelle D."/>
            <person name="Porwollik S."/>
            <person name="Prescott A.M."/>
            <person name="Presecan E."/>
            <person name="Pujic P."/>
            <person name="Purnelle B."/>
            <person name="Rapoport G."/>
            <person name="Rey M."/>
            <person name="Reynolds S."/>
            <person name="Rieger M."/>
            <person name="Rivolta C."/>
            <person name="Rocha E."/>
            <person name="Roche B."/>
            <person name="Rose M."/>
            <person name="Sadaie Y."/>
            <person name="Sato T."/>
            <person name="Scanlan E."/>
            <person name="Schleich S."/>
            <person name="Schroeter R."/>
            <person name="Scoffone F."/>
            <person name="Sekiguchi J."/>
            <person name="Sekowska A."/>
            <person name="Seror S.J."/>
            <person name="Serror P."/>
            <person name="Shin B.-S."/>
            <person name="Soldo B."/>
            <person name="Sorokin A."/>
            <person name="Tacconi E."/>
            <person name="Takagi T."/>
            <person name="Takahashi H."/>
            <person name="Takemaru K."/>
            <person name="Takeuchi M."/>
            <person name="Tamakoshi A."/>
            <person name="Tanaka T."/>
            <person name="Terpstra P."/>
            <person name="Tognoni A."/>
            <person name="Tosato V."/>
            <person name="Uchiyama S."/>
            <person name="Vandenbol M."/>
            <person name="Vannier F."/>
            <person name="Vassarotti A."/>
            <person name="Viari A."/>
            <person name="Wambutt R."/>
            <person name="Wedler E."/>
            <person name="Wedler H."/>
            <person name="Weitzenegger T."/>
            <person name="Winters P."/>
            <person name="Wipat A."/>
            <person name="Yamamoto H."/>
            <person name="Yamane K."/>
            <person name="Yasumoto K."/>
            <person name="Yata K."/>
            <person name="Yoshida K."/>
            <person name="Yoshikawa H.-F."/>
            <person name="Zumstein E."/>
            <person name="Yoshikawa H."/>
            <person name="Danchin A."/>
        </authorList>
    </citation>
    <scope>NUCLEOTIDE SEQUENCE [LARGE SCALE GENOMIC DNA]</scope>
    <source>
        <strain>168</strain>
    </source>
</reference>
<proteinExistence type="evidence at transcript level"/>
<organism>
    <name type="scientific">Bacillus subtilis (strain 168)</name>
    <dbReference type="NCBI Taxonomy" id="224308"/>
    <lineage>
        <taxon>Bacteria</taxon>
        <taxon>Bacillati</taxon>
        <taxon>Bacillota</taxon>
        <taxon>Bacilli</taxon>
        <taxon>Bacillales</taxon>
        <taxon>Bacillaceae</taxon>
        <taxon>Bacillus</taxon>
    </lineage>
</organism>
<name>SSUA_BACSU</name>
<accession>P40400</accession>
<protein>
    <recommendedName>
        <fullName>Putative aliphatic sulfonates-binding protein</fullName>
    </recommendedName>
</protein>
<sequence>MKKGLIVLVAVIFLLAGCGANGASGDHKQLKEIRIGIQQSLSPLLIAKEKGWFEDAFEKEGIKVKWVEFQSGPPQFEGLAADKLDFSQVGNSPVIAGQAAGIDFKEIGLSQDGLKANGILVNQNSGIQDVKGLKGKKIAVAKGSSGFDFLYKALDQVGLSANDVTIIQLQPDEAASAFENGSVDAWSIWEPYLSLETMKHGAKILVNGESTDLYSPGFTLVRTKFSEEHPDEVVRFLKVFNKAVVWQKEHLDEAADLYSDIKDLDKKVVENVLKNTEPLNEIISDDIVKAQQETADFQFRTKAIDKKIDVKDVVDNTFIKKALEEHSSGGDQ</sequence>